<dbReference type="EMBL" id="M63298">
    <property type="protein sequence ID" value="AAA29797.1"/>
    <property type="molecule type" value="mRNA"/>
</dbReference>
<dbReference type="EMBL" id="Z11681">
    <property type="protein sequence ID" value="CAA77743.1"/>
    <property type="molecule type" value="Genomic_DNA"/>
</dbReference>
<dbReference type="PIR" id="S24615">
    <property type="entry name" value="A41099"/>
</dbReference>
<dbReference type="SMR" id="P26914"/>
<dbReference type="GO" id="GO:0005576">
    <property type="term" value="C:extracellular region"/>
    <property type="evidence" value="ECO:0007669"/>
    <property type="project" value="UniProtKB-SubCell"/>
</dbReference>
<dbReference type="GO" id="GO:0020037">
    <property type="term" value="F:heme binding"/>
    <property type="evidence" value="ECO:0007669"/>
    <property type="project" value="InterPro"/>
</dbReference>
<dbReference type="GO" id="GO:0046872">
    <property type="term" value="F:metal ion binding"/>
    <property type="evidence" value="ECO:0007669"/>
    <property type="project" value="UniProtKB-KW"/>
</dbReference>
<dbReference type="GO" id="GO:0019825">
    <property type="term" value="F:oxygen binding"/>
    <property type="evidence" value="ECO:0007669"/>
    <property type="project" value="InterPro"/>
</dbReference>
<dbReference type="GO" id="GO:0005344">
    <property type="term" value="F:oxygen carrier activity"/>
    <property type="evidence" value="ECO:0007669"/>
    <property type="project" value="UniProtKB-KW"/>
</dbReference>
<dbReference type="CDD" id="cd01040">
    <property type="entry name" value="Mb-like"/>
    <property type="match status" value="2"/>
</dbReference>
<dbReference type="Gene3D" id="1.10.490.10">
    <property type="entry name" value="Globins"/>
    <property type="match status" value="2"/>
</dbReference>
<dbReference type="InterPro" id="IPR000971">
    <property type="entry name" value="Globin"/>
</dbReference>
<dbReference type="InterPro" id="IPR050532">
    <property type="entry name" value="Globin-like_OT"/>
</dbReference>
<dbReference type="InterPro" id="IPR009050">
    <property type="entry name" value="Globin-like_sf"/>
</dbReference>
<dbReference type="InterPro" id="IPR012292">
    <property type="entry name" value="Globin/Proto"/>
</dbReference>
<dbReference type="InterPro" id="IPR044399">
    <property type="entry name" value="Mb-like_M"/>
</dbReference>
<dbReference type="PANTHER" id="PTHR46458">
    <property type="entry name" value="BLR2807 PROTEIN"/>
    <property type="match status" value="1"/>
</dbReference>
<dbReference type="PANTHER" id="PTHR46458:SF1">
    <property type="entry name" value="GEO09476P1"/>
    <property type="match status" value="1"/>
</dbReference>
<dbReference type="Pfam" id="PF00042">
    <property type="entry name" value="Globin"/>
    <property type="match status" value="2"/>
</dbReference>
<dbReference type="SUPFAM" id="SSF46458">
    <property type="entry name" value="Globin-like"/>
    <property type="match status" value="2"/>
</dbReference>
<dbReference type="PROSITE" id="PS01033">
    <property type="entry name" value="GLOBIN"/>
    <property type="match status" value="2"/>
</dbReference>
<name>GLB_PSEDC</name>
<reference key="1">
    <citation type="journal article" date="1991" name="Proc. Natl. Acad. Sci. U.S.A.">
        <title>Isolation and sequencing of a cDNA for an unusual hemoglobin from the parasitic nematode Pseudoterranova decipiens.</title>
        <authorList>
            <person name="Dixon B."/>
            <person name="Walker B."/>
            <person name="Kimmins W."/>
            <person name="Pohajdak B."/>
        </authorList>
    </citation>
    <scope>NUCLEOTIDE SEQUENCE [MRNA]</scope>
    <source>
        <tissue>Larva</tissue>
    </source>
</reference>
<reference key="2">
    <citation type="journal article" date="1992" name="J. Mol. Evol.">
        <title>A nematode hemoglobin gene contains an intron previously thought to be unique to plants.</title>
        <authorList>
            <person name="Dixon B."/>
            <person name="Walker B."/>
            <person name="Kimmins W."/>
            <person name="Pohajdak B."/>
        </authorList>
    </citation>
    <scope>NUCLEOTIDE SEQUENCE [GENOMIC DNA]</scope>
</reference>
<comment type="subunit">
    <text evidence="1">Homooctamer.</text>
</comment>
<comment type="subcellular location">
    <subcellularLocation>
        <location>Secreted</location>
        <location>Extracellular space</location>
    </subcellularLocation>
</comment>
<comment type="domain">
    <text>Consist of two tandemly linked globin-like sequences which probably each bind a heme group and a C-terminal extension which may act as a cement between the eight subunits.</text>
</comment>
<comment type="similarity">
    <text evidence="3">Belongs to the globin family.</text>
</comment>
<keyword id="KW-0325">Glycoprotein</keyword>
<keyword id="KW-0349">Heme</keyword>
<keyword id="KW-0408">Iron</keyword>
<keyword id="KW-0479">Metal-binding</keyword>
<keyword id="KW-0561">Oxygen transport</keyword>
<keyword id="KW-0677">Repeat</keyword>
<keyword id="KW-0964">Secreted</keyword>
<keyword id="KW-0732">Signal</keyword>
<keyword id="KW-0813">Transport</keyword>
<evidence type="ECO:0000250" key="1"/>
<evidence type="ECO:0000255" key="2"/>
<evidence type="ECO:0000255" key="3">
    <source>
        <dbReference type="PROSITE-ProRule" id="PRU00238"/>
    </source>
</evidence>
<evidence type="ECO:0000256" key="4">
    <source>
        <dbReference type="SAM" id="MobiDB-lite"/>
    </source>
</evidence>
<evidence type="ECO:0000305" key="5"/>
<proteinExistence type="evidence at transcript level"/>
<organism>
    <name type="scientific">Pseudoterranova decipiens</name>
    <name type="common">Sealworm</name>
    <dbReference type="NCBI Taxonomy" id="6271"/>
    <lineage>
        <taxon>Eukaryota</taxon>
        <taxon>Metazoa</taxon>
        <taxon>Ecdysozoa</taxon>
        <taxon>Nematoda</taxon>
        <taxon>Chromadorea</taxon>
        <taxon>Rhabditida</taxon>
        <taxon>Spirurina</taxon>
        <taxon>Ascaridomorpha</taxon>
        <taxon>Ascaridoidea</taxon>
        <taxon>Anisakidae</taxon>
        <taxon>Pseudoterranova</taxon>
    </lineage>
</organism>
<protein>
    <recommendedName>
        <fullName>Extracellular globin</fullName>
    </recommendedName>
</protein>
<accession>P26914</accession>
<sequence length="333" mass="39452">MHSSIVLAIVLFVAIASASKTRELCMKSLEHAKVGTSKEAKQDGIDLYKHMFEHYPAMKKYFKHRENYTPADVQKDPFFIKQGQNILLACHVLCATYDDRETFDAYVGELMARHERDHVKIPNDVWNHFWEHFIEFLGSKTTLDEPTKHAWQEIGKEFSHEISHHGRHSVRDHCMNSLEYIAIGDKEHQKQNGIDLYKHMFEHYPHMRKAFKGRENFTKEDVQKDAFFVKQGHKILLALRMLCSSYDDEPTFDYFVDALMDRHIKDDIHLPQEQWHEFWKLFAEYLNEKSHQHLTEAEKHAWSTIGEDFAHEADKHAKAEKDHHEGEHKEEHH</sequence>
<feature type="signal peptide" evidence="1">
    <location>
        <begin position="1"/>
        <end position="18"/>
    </location>
</feature>
<feature type="chain" id="PRO_0000011184" description="Extracellular globin">
    <location>
        <begin position="19"/>
        <end position="333"/>
    </location>
</feature>
<feature type="domain" description="Globin 1" evidence="3">
    <location>
        <begin position="25"/>
        <end position="167"/>
    </location>
</feature>
<feature type="domain" description="Globin 2" evidence="3">
    <location>
        <begin position="174"/>
        <end position="318"/>
    </location>
</feature>
<feature type="region of interest" description="Disordered" evidence="4">
    <location>
        <begin position="314"/>
        <end position="333"/>
    </location>
</feature>
<feature type="binding site" description="distal binding residue" evidence="3">
    <location>
        <position position="82"/>
    </location>
    <ligand>
        <name>heme b</name>
        <dbReference type="ChEBI" id="CHEBI:60344"/>
    </ligand>
    <ligandPart>
        <name>Fe</name>
        <dbReference type="ChEBI" id="CHEBI:18248"/>
    </ligandPart>
</feature>
<feature type="binding site" description="proximal binding residue" evidence="3">
    <location>
        <position position="114"/>
    </location>
    <ligand>
        <name>heme b</name>
        <dbReference type="ChEBI" id="CHEBI:60344"/>
    </ligand>
    <ligandPart>
        <name>Fe</name>
        <dbReference type="ChEBI" id="CHEBI:18248"/>
    </ligandPart>
</feature>
<feature type="binding site" description="distal binding residue" evidence="3">
    <location>
        <position position="231"/>
    </location>
    <ligand>
        <name>heme b</name>
        <dbReference type="ChEBI" id="CHEBI:60344"/>
    </ligand>
    <ligandPart>
        <name>Fe</name>
        <dbReference type="ChEBI" id="CHEBI:18248"/>
    </ligandPart>
</feature>
<feature type="binding site" description="proximal binding residue" evidence="3">
    <location>
        <position position="263"/>
    </location>
    <ligand>
        <name>heme b</name>
        <dbReference type="ChEBI" id="CHEBI:60344"/>
    </ligand>
    <ligandPart>
        <name>Fe</name>
        <dbReference type="ChEBI" id="CHEBI:18248"/>
    </ligandPart>
</feature>
<feature type="glycosylation site" description="N-linked (GlcNAc...) asparagine" evidence="2">
    <location>
        <position position="216"/>
    </location>
</feature>
<feature type="sequence conflict" description="In Ref. 2; CAA77743." evidence="5" ref="2">
    <original>I</original>
    <variation>T</variation>
    <location>
        <position position="9"/>
    </location>
</feature>